<organism>
    <name type="scientific">Mus musculus</name>
    <name type="common">Mouse</name>
    <dbReference type="NCBI Taxonomy" id="10090"/>
    <lineage>
        <taxon>Eukaryota</taxon>
        <taxon>Metazoa</taxon>
        <taxon>Chordata</taxon>
        <taxon>Craniata</taxon>
        <taxon>Vertebrata</taxon>
        <taxon>Euteleostomi</taxon>
        <taxon>Mammalia</taxon>
        <taxon>Eutheria</taxon>
        <taxon>Euarchontoglires</taxon>
        <taxon>Glires</taxon>
        <taxon>Rodentia</taxon>
        <taxon>Myomorpha</taxon>
        <taxon>Muroidea</taxon>
        <taxon>Muridae</taxon>
        <taxon>Murinae</taxon>
        <taxon>Mus</taxon>
        <taxon>Mus</taxon>
    </lineage>
</organism>
<feature type="signal peptide" evidence="4">
    <location>
        <begin position="1"/>
        <end position="28"/>
    </location>
</feature>
<feature type="chain" id="PRO_0000018686" description="Microfibrillar-associated protein 5">
    <location>
        <begin position="29"/>
        <end position="164"/>
    </location>
</feature>
<feature type="short sequence motif" description="Cell attachment site" evidence="4">
    <location>
        <begin position="30"/>
        <end position="32"/>
    </location>
</feature>
<feature type="glycosylation site" description="N-linked (GlcNAc...) asparagine" evidence="4">
    <location>
        <position position="70"/>
    </location>
</feature>
<feature type="sequence conflict" description="In Ref. 3; AAH25131." evidence="6" ref="3">
    <original>I</original>
    <variation>V</variation>
    <location>
        <position position="15"/>
    </location>
</feature>
<feature type="sequence conflict" description="In Ref. 3; AAH25131." evidence="6" ref="3">
    <original>G</original>
    <variation>D</variation>
    <location>
        <position position="67"/>
    </location>
</feature>
<protein>
    <recommendedName>
        <fullName>Microfibrillar-associated protein 5</fullName>
        <shortName>MFAP-5</shortName>
    </recommendedName>
    <alternativeName>
        <fullName>Microfibril-associated glycoprotein 2</fullName>
        <shortName>MAGP-2</shortName>
    </alternativeName>
</protein>
<comment type="function">
    <text evidence="2 5">May play a role in hematopoiesis. In the cardiovascular system, could regulate growth factors or participate in cell signaling in maintaining large vessel integrity (PubMed:23963447). Component of the elastin-associated microfibrils (By similarity).</text>
</comment>
<comment type="subunit">
    <text evidence="3 5">Interacts with TGFB2 (PubMed:23963447). Interacts with BMP2. Interacts with FBN1 (via N-terminal domain) and FBN2 (By similarity).</text>
</comment>
<comment type="subcellular location">
    <subcellularLocation>
        <location evidence="1">Secreted</location>
        <location evidence="1">Extracellular space</location>
        <location evidence="1">Extracellular matrix</location>
    </subcellularLocation>
</comment>
<comment type="PTM">
    <text evidence="1">Forms intermolecular disulfide bonds either with other MAGP-2 molecules or with other components of the microfibrils.</text>
</comment>
<comment type="disruption phenotype">
    <text evidence="5">Mice appear normal by several measures, are fertile, and have a normal life span, but are neutropenic.</text>
</comment>
<comment type="similarity">
    <text evidence="6">Belongs to the MFAP family.</text>
</comment>
<reference key="1">
    <citation type="journal article" date="2000" name="Mamm. Genome">
        <title>Organization of the mouse microfibril-associated glycoprotein-2 (MAGP-2) gene.</title>
        <authorList>
            <person name="Frankfater C."/>
            <person name="Maus E."/>
            <person name="Gaal K."/>
            <person name="Segade F."/>
            <person name="Copeland N.G."/>
            <person name="Gilbert D.J."/>
            <person name="Jenkins N.A."/>
            <person name="Shipley J.M."/>
        </authorList>
    </citation>
    <scope>NUCLEOTIDE SEQUENCE [MRNA]</scope>
</reference>
<reference key="2">
    <citation type="journal article" date="2005" name="Science">
        <title>The transcriptional landscape of the mammalian genome.</title>
        <authorList>
            <person name="Carninci P."/>
            <person name="Kasukawa T."/>
            <person name="Katayama S."/>
            <person name="Gough J."/>
            <person name="Frith M.C."/>
            <person name="Maeda N."/>
            <person name="Oyama R."/>
            <person name="Ravasi T."/>
            <person name="Lenhard B."/>
            <person name="Wells C."/>
            <person name="Kodzius R."/>
            <person name="Shimokawa K."/>
            <person name="Bajic V.B."/>
            <person name="Brenner S.E."/>
            <person name="Batalov S."/>
            <person name="Forrest A.R."/>
            <person name="Zavolan M."/>
            <person name="Davis M.J."/>
            <person name="Wilming L.G."/>
            <person name="Aidinis V."/>
            <person name="Allen J.E."/>
            <person name="Ambesi-Impiombato A."/>
            <person name="Apweiler R."/>
            <person name="Aturaliya R.N."/>
            <person name="Bailey T.L."/>
            <person name="Bansal M."/>
            <person name="Baxter L."/>
            <person name="Beisel K.W."/>
            <person name="Bersano T."/>
            <person name="Bono H."/>
            <person name="Chalk A.M."/>
            <person name="Chiu K.P."/>
            <person name="Choudhary V."/>
            <person name="Christoffels A."/>
            <person name="Clutterbuck D.R."/>
            <person name="Crowe M.L."/>
            <person name="Dalla E."/>
            <person name="Dalrymple B.P."/>
            <person name="de Bono B."/>
            <person name="Della Gatta G."/>
            <person name="di Bernardo D."/>
            <person name="Down T."/>
            <person name="Engstrom P."/>
            <person name="Fagiolini M."/>
            <person name="Faulkner G."/>
            <person name="Fletcher C.F."/>
            <person name="Fukushima T."/>
            <person name="Furuno M."/>
            <person name="Futaki S."/>
            <person name="Gariboldi M."/>
            <person name="Georgii-Hemming P."/>
            <person name="Gingeras T.R."/>
            <person name="Gojobori T."/>
            <person name="Green R.E."/>
            <person name="Gustincich S."/>
            <person name="Harbers M."/>
            <person name="Hayashi Y."/>
            <person name="Hensch T.K."/>
            <person name="Hirokawa N."/>
            <person name="Hill D."/>
            <person name="Huminiecki L."/>
            <person name="Iacono M."/>
            <person name="Ikeo K."/>
            <person name="Iwama A."/>
            <person name="Ishikawa T."/>
            <person name="Jakt M."/>
            <person name="Kanapin A."/>
            <person name="Katoh M."/>
            <person name="Kawasawa Y."/>
            <person name="Kelso J."/>
            <person name="Kitamura H."/>
            <person name="Kitano H."/>
            <person name="Kollias G."/>
            <person name="Krishnan S.P."/>
            <person name="Kruger A."/>
            <person name="Kummerfeld S.K."/>
            <person name="Kurochkin I.V."/>
            <person name="Lareau L.F."/>
            <person name="Lazarevic D."/>
            <person name="Lipovich L."/>
            <person name="Liu J."/>
            <person name="Liuni S."/>
            <person name="McWilliam S."/>
            <person name="Madan Babu M."/>
            <person name="Madera M."/>
            <person name="Marchionni L."/>
            <person name="Matsuda H."/>
            <person name="Matsuzawa S."/>
            <person name="Miki H."/>
            <person name="Mignone F."/>
            <person name="Miyake S."/>
            <person name="Morris K."/>
            <person name="Mottagui-Tabar S."/>
            <person name="Mulder N."/>
            <person name="Nakano N."/>
            <person name="Nakauchi H."/>
            <person name="Ng P."/>
            <person name="Nilsson R."/>
            <person name="Nishiguchi S."/>
            <person name="Nishikawa S."/>
            <person name="Nori F."/>
            <person name="Ohara O."/>
            <person name="Okazaki Y."/>
            <person name="Orlando V."/>
            <person name="Pang K.C."/>
            <person name="Pavan W.J."/>
            <person name="Pavesi G."/>
            <person name="Pesole G."/>
            <person name="Petrovsky N."/>
            <person name="Piazza S."/>
            <person name="Reed J."/>
            <person name="Reid J.F."/>
            <person name="Ring B.Z."/>
            <person name="Ringwald M."/>
            <person name="Rost B."/>
            <person name="Ruan Y."/>
            <person name="Salzberg S.L."/>
            <person name="Sandelin A."/>
            <person name="Schneider C."/>
            <person name="Schoenbach C."/>
            <person name="Sekiguchi K."/>
            <person name="Semple C.A."/>
            <person name="Seno S."/>
            <person name="Sessa L."/>
            <person name="Sheng Y."/>
            <person name="Shibata Y."/>
            <person name="Shimada H."/>
            <person name="Shimada K."/>
            <person name="Silva D."/>
            <person name="Sinclair B."/>
            <person name="Sperling S."/>
            <person name="Stupka E."/>
            <person name="Sugiura K."/>
            <person name="Sultana R."/>
            <person name="Takenaka Y."/>
            <person name="Taki K."/>
            <person name="Tammoja K."/>
            <person name="Tan S.L."/>
            <person name="Tang S."/>
            <person name="Taylor M.S."/>
            <person name="Tegner J."/>
            <person name="Teichmann S.A."/>
            <person name="Ueda H.R."/>
            <person name="van Nimwegen E."/>
            <person name="Verardo R."/>
            <person name="Wei C.L."/>
            <person name="Yagi K."/>
            <person name="Yamanishi H."/>
            <person name="Zabarovsky E."/>
            <person name="Zhu S."/>
            <person name="Zimmer A."/>
            <person name="Hide W."/>
            <person name="Bult C."/>
            <person name="Grimmond S.M."/>
            <person name="Teasdale R.D."/>
            <person name="Liu E.T."/>
            <person name="Brusic V."/>
            <person name="Quackenbush J."/>
            <person name="Wahlestedt C."/>
            <person name="Mattick J.S."/>
            <person name="Hume D.A."/>
            <person name="Kai C."/>
            <person name="Sasaki D."/>
            <person name="Tomaru Y."/>
            <person name="Fukuda S."/>
            <person name="Kanamori-Katayama M."/>
            <person name="Suzuki M."/>
            <person name="Aoki J."/>
            <person name="Arakawa T."/>
            <person name="Iida J."/>
            <person name="Imamura K."/>
            <person name="Itoh M."/>
            <person name="Kato T."/>
            <person name="Kawaji H."/>
            <person name="Kawagashira N."/>
            <person name="Kawashima T."/>
            <person name="Kojima M."/>
            <person name="Kondo S."/>
            <person name="Konno H."/>
            <person name="Nakano K."/>
            <person name="Ninomiya N."/>
            <person name="Nishio T."/>
            <person name="Okada M."/>
            <person name="Plessy C."/>
            <person name="Shibata K."/>
            <person name="Shiraki T."/>
            <person name="Suzuki S."/>
            <person name="Tagami M."/>
            <person name="Waki K."/>
            <person name="Watahiki A."/>
            <person name="Okamura-Oho Y."/>
            <person name="Suzuki H."/>
            <person name="Kawai J."/>
            <person name="Hayashizaki Y."/>
        </authorList>
    </citation>
    <scope>NUCLEOTIDE SEQUENCE [LARGE SCALE MRNA]</scope>
    <source>
        <strain>C57BL/6J</strain>
        <tissue>Embryo</tissue>
    </source>
</reference>
<reference key="3">
    <citation type="journal article" date="2004" name="Genome Res.">
        <title>The status, quality, and expansion of the NIH full-length cDNA project: the Mammalian Gene Collection (MGC).</title>
        <authorList>
            <consortium name="The MGC Project Team"/>
        </authorList>
    </citation>
    <scope>NUCLEOTIDE SEQUENCE [LARGE SCALE MRNA]</scope>
</reference>
<reference key="4">
    <citation type="journal article" date="2013" name="J. Biol. Chem.">
        <title>Microfibril-associated glycoprotein 2 (MAGP2) loss of function has pleiotropic effects in vivo.</title>
        <authorList>
            <person name="Combs M.D."/>
            <person name="Knutsen R.H."/>
            <person name="Broekelmann T.J."/>
            <person name="Toennies H.M."/>
            <person name="Brett T.J."/>
            <person name="Miller C.A."/>
            <person name="Kober D.L."/>
            <person name="Craft C.S."/>
            <person name="Atkinson J.J."/>
            <person name="Shipley J.M."/>
            <person name="Trask B.C."/>
            <person name="Mecham R.P."/>
        </authorList>
    </citation>
    <scope>FUNCTION</scope>
    <scope>DISRUPTION PHENOTYPE</scope>
    <scope>INTERACTION WITH TGFB2 AND BMP2</scope>
</reference>
<evidence type="ECO:0000250" key="1"/>
<evidence type="ECO:0000250" key="2">
    <source>
        <dbReference type="UniProtKB" id="Q13361"/>
    </source>
</evidence>
<evidence type="ECO:0000250" key="3">
    <source>
        <dbReference type="UniProtKB" id="Q28022"/>
    </source>
</evidence>
<evidence type="ECO:0000255" key="4"/>
<evidence type="ECO:0000269" key="5">
    <source>
    </source>
</evidence>
<evidence type="ECO:0000305" key="6"/>
<accession>Q9QZJ6</accession>
<gene>
    <name type="primary">Mfap5</name>
    <name type="synonym">Magp2</name>
</gene>
<keyword id="KW-1015">Disulfide bond</keyword>
<keyword id="KW-0272">Extracellular matrix</keyword>
<keyword id="KW-0325">Glycoprotein</keyword>
<keyword id="KW-1185">Reference proteome</keyword>
<keyword id="KW-0964">Secreted</keyword>
<keyword id="KW-0732">Signal</keyword>
<proteinExistence type="evidence at protein level"/>
<dbReference type="EMBL" id="AF180805">
    <property type="protein sequence ID" value="AAD53950.1"/>
    <property type="molecule type" value="mRNA"/>
</dbReference>
<dbReference type="EMBL" id="AK011458">
    <property type="protein sequence ID" value="BAB27631.1"/>
    <property type="molecule type" value="mRNA"/>
</dbReference>
<dbReference type="EMBL" id="AK003479">
    <property type="protein sequence ID" value="BAB22810.1"/>
    <property type="molecule type" value="mRNA"/>
</dbReference>
<dbReference type="EMBL" id="BC025131">
    <property type="protein sequence ID" value="AAH25131.1"/>
    <property type="molecule type" value="mRNA"/>
</dbReference>
<dbReference type="CCDS" id="CCDS20496.1"/>
<dbReference type="RefSeq" id="NP_056591.1">
    <property type="nucleotide sequence ID" value="NM_015776.3"/>
</dbReference>
<dbReference type="FunCoup" id="Q9QZJ6">
    <property type="interactions" value="127"/>
</dbReference>
<dbReference type="IntAct" id="Q9QZJ6">
    <property type="interactions" value="1"/>
</dbReference>
<dbReference type="STRING" id="10090.ENSMUSP00000122863"/>
<dbReference type="GlyCosmos" id="Q9QZJ6">
    <property type="glycosylation" value="1 site, No reported glycans"/>
</dbReference>
<dbReference type="GlyGen" id="Q9QZJ6">
    <property type="glycosylation" value="1 site"/>
</dbReference>
<dbReference type="iPTMnet" id="Q9QZJ6"/>
<dbReference type="PhosphoSitePlus" id="Q9QZJ6"/>
<dbReference type="jPOST" id="Q9QZJ6"/>
<dbReference type="PaxDb" id="10090-ENSMUSP00000122863"/>
<dbReference type="ProteomicsDB" id="295562"/>
<dbReference type="Antibodypedia" id="2040">
    <property type="antibodies" value="214 antibodies from 34 providers"/>
</dbReference>
<dbReference type="DNASU" id="50530"/>
<dbReference type="Ensembl" id="ENSMUST00000148517.8">
    <property type="protein sequence ID" value="ENSMUSP00000122863.2"/>
    <property type="gene ID" value="ENSMUSG00000030116.15"/>
</dbReference>
<dbReference type="GeneID" id="50530"/>
<dbReference type="KEGG" id="mmu:50530"/>
<dbReference type="UCSC" id="uc009dpi.1">
    <property type="organism name" value="mouse"/>
</dbReference>
<dbReference type="AGR" id="MGI:1354387"/>
<dbReference type="CTD" id="8076"/>
<dbReference type="MGI" id="MGI:1354387">
    <property type="gene designation" value="Mfap5"/>
</dbReference>
<dbReference type="VEuPathDB" id="HostDB:ENSMUSG00000030116"/>
<dbReference type="eggNOG" id="ENOG502S4DY">
    <property type="taxonomic scope" value="Eukaryota"/>
</dbReference>
<dbReference type="GeneTree" id="ENSGT00390000017736"/>
<dbReference type="InParanoid" id="Q9QZJ6"/>
<dbReference type="OMA" id="XCRDEKF"/>
<dbReference type="OrthoDB" id="9446021at2759"/>
<dbReference type="PhylomeDB" id="Q9QZJ6"/>
<dbReference type="TreeFam" id="TF333418"/>
<dbReference type="Reactome" id="R-MMU-1566948">
    <property type="pathway name" value="Elastic fibre formation"/>
</dbReference>
<dbReference type="Reactome" id="R-MMU-2129379">
    <property type="pathway name" value="Molecules associated with elastic fibres"/>
</dbReference>
<dbReference type="BioGRID-ORCS" id="50530">
    <property type="hits" value="7 hits in 80 CRISPR screens"/>
</dbReference>
<dbReference type="ChiTaRS" id="Mfap5">
    <property type="organism name" value="mouse"/>
</dbReference>
<dbReference type="PRO" id="PR:Q9QZJ6"/>
<dbReference type="Proteomes" id="UP000000589">
    <property type="component" value="Chromosome 6"/>
</dbReference>
<dbReference type="RNAct" id="Q9QZJ6">
    <property type="molecule type" value="protein"/>
</dbReference>
<dbReference type="Bgee" id="ENSMUSG00000030116">
    <property type="expression patterns" value="Expressed in decidua and 161 other cell types or tissues"/>
</dbReference>
<dbReference type="ExpressionAtlas" id="Q9QZJ6">
    <property type="expression patterns" value="baseline and differential"/>
</dbReference>
<dbReference type="GO" id="GO:0062023">
    <property type="term" value="C:collagen-containing extracellular matrix"/>
    <property type="evidence" value="ECO:0007005"/>
    <property type="project" value="BHF-UCL"/>
</dbReference>
<dbReference type="GO" id="GO:0031012">
    <property type="term" value="C:extracellular matrix"/>
    <property type="evidence" value="ECO:0000314"/>
    <property type="project" value="MGI"/>
</dbReference>
<dbReference type="GO" id="GO:0005576">
    <property type="term" value="C:extracellular region"/>
    <property type="evidence" value="ECO:0007669"/>
    <property type="project" value="UniProtKB-KW"/>
</dbReference>
<dbReference type="GO" id="GO:0001527">
    <property type="term" value="C:microfibril"/>
    <property type="evidence" value="ECO:0000250"/>
    <property type="project" value="UniProtKB"/>
</dbReference>
<dbReference type="GO" id="GO:0030023">
    <property type="term" value="F:extracellular matrix constituent conferring elasticity"/>
    <property type="evidence" value="ECO:0000304"/>
    <property type="project" value="MGI"/>
</dbReference>
<dbReference type="GO" id="GO:0060216">
    <property type="term" value="P:definitive hemopoiesis"/>
    <property type="evidence" value="ECO:0000315"/>
    <property type="project" value="UniProtKB"/>
</dbReference>
<dbReference type="GO" id="GO:0097435">
    <property type="term" value="P:supramolecular fiber organization"/>
    <property type="evidence" value="ECO:0000314"/>
    <property type="project" value="MGI"/>
</dbReference>
<dbReference type="InterPro" id="IPR008673">
    <property type="entry name" value="MAGP"/>
</dbReference>
<dbReference type="PANTHER" id="PTHR16485">
    <property type="entry name" value="MICROFIBRILLAR-ASSOCIATED PROTEIN 2"/>
    <property type="match status" value="1"/>
</dbReference>
<dbReference type="PANTHER" id="PTHR16485:SF6">
    <property type="entry name" value="MICROFIBRILLAR-ASSOCIATED PROTEIN 5"/>
    <property type="match status" value="1"/>
</dbReference>
<dbReference type="Pfam" id="PF05507">
    <property type="entry name" value="MAGP"/>
    <property type="match status" value="1"/>
</dbReference>
<name>MFAP5_MOUSE</name>
<sequence>MLFLGQKALLLVLAISIPSDWLPLGVSGQRGDDVPETFTDDPNLVNDPSTDDTALADITPSTDDLAGDKNATAECRDEKFACTRLYSVHRPVRQCVHQSCFTSLRRMYIINNEICSRLVCKEHEAMKDELCRQMAGLPPRRLRRSNYFRLPPCENMNLQRPDGL</sequence>